<sequence>MPVLPMPPLMQNAVEPMQVDIAPPNEDNENNEEQQIVVENPSIDLEVYANQYAGIVRLHRLIYVADVCPVLAVEALKMAITYVQTTYNVNLYQVLHKRLSDLNAGNAPAPPANAGGDQAGAAAPGPLAAAPLPDIAAQPVAQAQGQAQPAVEKDAFAYDAAWVDTKMKKAALKLEKLDSDLKNYKSNSIKESIRRGHDDLADHYLSCGDLTNALKCYSRARDYCTSGKHVVNMCLNVIKVSIYLQNWAHVMSYISKAESTPDFAEGSKEANAQVHTRLECAAGLAELQQKKYKVAAKHFLNANFDHCDFPEMISTSNVAVYGGLCALATFDRQELKRLVIASTSFKLFLELEPQLRDIIFKFYESKYASCLTLLDEIRDNLLVDMYIAPHVTTLYTKIRNRALIQYFSPYMSADMHKMAMAFNSSVGDLENEVMQLILDGQIQARIDSHNKILFAKEADQRNSTFERALIMGKQYQRHTRMLVLRAAMLKSHIHVKSISREGGSNHGAELCVSAGSSTTAQLARI</sequence>
<protein>
    <recommendedName>
        <fullName>COP9 signalosome complex subunit 1b</fullName>
        <shortName>Dch1-2</shortName>
        <shortName>Signalosome subunit 1b</shortName>
    </recommendedName>
</protein>
<keyword id="KW-0963">Cytoplasm</keyword>
<keyword id="KW-0217">Developmental protein</keyword>
<keyword id="KW-0221">Differentiation</keyword>
<keyword id="KW-0539">Nucleus</keyword>
<keyword id="KW-0896">Oogenesis</keyword>
<keyword id="KW-1185">Reference proteome</keyword>
<keyword id="KW-0736">Signalosome</keyword>
<organism>
    <name type="scientific">Drosophila melanogaster</name>
    <name type="common">Fruit fly</name>
    <dbReference type="NCBI Taxonomy" id="7227"/>
    <lineage>
        <taxon>Eukaryota</taxon>
        <taxon>Metazoa</taxon>
        <taxon>Ecdysozoa</taxon>
        <taxon>Arthropoda</taxon>
        <taxon>Hexapoda</taxon>
        <taxon>Insecta</taxon>
        <taxon>Pterygota</taxon>
        <taxon>Neoptera</taxon>
        <taxon>Endopterygota</taxon>
        <taxon>Diptera</taxon>
        <taxon>Brachycera</taxon>
        <taxon>Muscomorpha</taxon>
        <taxon>Ephydroidea</taxon>
        <taxon>Drosophilidae</taxon>
        <taxon>Drosophila</taxon>
        <taxon>Sophophora</taxon>
    </lineage>
</organism>
<accession>Q9VVU5</accession>
<accession>Q9XYW3</accession>
<name>CSN1_DROME</name>
<dbReference type="EMBL" id="AF129080">
    <property type="protein sequence ID" value="AAD28605.1"/>
    <property type="molecule type" value="mRNA"/>
</dbReference>
<dbReference type="EMBL" id="AE014296">
    <property type="protein sequence ID" value="AAF49212.1"/>
    <property type="molecule type" value="Genomic_DNA"/>
</dbReference>
<dbReference type="EMBL" id="AY051972">
    <property type="protein sequence ID" value="AAK93396.1"/>
    <property type="molecule type" value="mRNA"/>
</dbReference>
<dbReference type="RefSeq" id="NP_524152.2">
    <property type="nucleotide sequence ID" value="NM_079428.3"/>
</dbReference>
<dbReference type="SMR" id="Q9VVU5"/>
<dbReference type="BioGRID" id="65343">
    <property type="interactions" value="2"/>
</dbReference>
<dbReference type="ComplexPortal" id="CPX-7974">
    <property type="entry name" value="COP9 signalosome complex"/>
</dbReference>
<dbReference type="FunCoup" id="Q9VVU5">
    <property type="interactions" value="1818"/>
</dbReference>
<dbReference type="IntAct" id="Q9VVU5">
    <property type="interactions" value="13"/>
</dbReference>
<dbReference type="STRING" id="7227.FBpp0074841"/>
<dbReference type="PaxDb" id="7227-FBpp0074841"/>
<dbReference type="DNASU" id="40063"/>
<dbReference type="EnsemblMetazoa" id="FBtr0075074">
    <property type="protein sequence ID" value="FBpp0074841"/>
    <property type="gene ID" value="FBgn0027057"/>
</dbReference>
<dbReference type="GeneID" id="40063"/>
<dbReference type="KEGG" id="dme:Dmel_CG3889"/>
<dbReference type="AGR" id="FB:FBgn0027057"/>
<dbReference type="CTD" id="40063"/>
<dbReference type="FlyBase" id="FBgn0027057">
    <property type="gene designation" value="CSN1b"/>
</dbReference>
<dbReference type="VEuPathDB" id="VectorBase:FBgn0027057"/>
<dbReference type="eggNOG" id="KOG0686">
    <property type="taxonomic scope" value="Eukaryota"/>
</dbReference>
<dbReference type="GeneTree" id="ENSGT00510000046608"/>
<dbReference type="HOGENOM" id="CLU_022348_1_0_1"/>
<dbReference type="InParanoid" id="Q9VVU5"/>
<dbReference type="OMA" id="IYLQNWA"/>
<dbReference type="OrthoDB" id="422427at2759"/>
<dbReference type="PhylomeDB" id="Q9VVU5"/>
<dbReference type="Reactome" id="R-DME-5696394">
    <property type="pathway name" value="DNA Damage Recognition in GG-NER"/>
</dbReference>
<dbReference type="Reactome" id="R-DME-6781823">
    <property type="pathway name" value="Formation of TC-NER Pre-Incision Complex"/>
</dbReference>
<dbReference type="Reactome" id="R-DME-8856825">
    <property type="pathway name" value="Cargo recognition for clathrin-mediated endocytosis"/>
</dbReference>
<dbReference type="Reactome" id="R-DME-8951664">
    <property type="pathway name" value="Neddylation"/>
</dbReference>
<dbReference type="Reactome" id="R-DME-9013422">
    <property type="pathway name" value="RHOBTB1 GTPase cycle"/>
</dbReference>
<dbReference type="BioGRID-ORCS" id="40063">
    <property type="hits" value="1 hit in 1 CRISPR screen"/>
</dbReference>
<dbReference type="GenomeRNAi" id="40063"/>
<dbReference type="PRO" id="PR:Q9VVU5"/>
<dbReference type="Proteomes" id="UP000000803">
    <property type="component" value="Chromosome 3L"/>
</dbReference>
<dbReference type="Bgee" id="FBgn0027057">
    <property type="expression patterns" value="Expressed in eye disc (Drosophila) and 64 other cell types or tissues"/>
</dbReference>
<dbReference type="GO" id="GO:0008180">
    <property type="term" value="C:COP9 signalosome"/>
    <property type="evidence" value="ECO:0000250"/>
    <property type="project" value="FlyBase"/>
</dbReference>
<dbReference type="GO" id="GO:0005737">
    <property type="term" value="C:cytoplasm"/>
    <property type="evidence" value="ECO:0007669"/>
    <property type="project" value="UniProtKB-SubCell"/>
</dbReference>
<dbReference type="GO" id="GO:0036099">
    <property type="term" value="P:female germ-line stem cell population maintenance"/>
    <property type="evidence" value="ECO:0000315"/>
    <property type="project" value="FlyBase"/>
</dbReference>
<dbReference type="GO" id="GO:0007281">
    <property type="term" value="P:germ cell development"/>
    <property type="evidence" value="ECO:0000315"/>
    <property type="project" value="FlyBase"/>
</dbReference>
<dbReference type="GO" id="GO:0048142">
    <property type="term" value="P:germarium-derived cystoblast division"/>
    <property type="evidence" value="ECO:0000315"/>
    <property type="project" value="FlyBase"/>
</dbReference>
<dbReference type="GO" id="GO:0048140">
    <property type="term" value="P:male germ-line cyst encapsulation"/>
    <property type="evidence" value="ECO:0000315"/>
    <property type="project" value="FlyBase"/>
</dbReference>
<dbReference type="GO" id="GO:0050821">
    <property type="term" value="P:protein stabilization"/>
    <property type="evidence" value="ECO:0000315"/>
    <property type="project" value="FlyBase"/>
</dbReference>
<dbReference type="Gene3D" id="1.25.40.570">
    <property type="match status" value="1"/>
</dbReference>
<dbReference type="InterPro" id="IPR048624">
    <property type="entry name" value="CSN1_C"/>
</dbReference>
<dbReference type="InterPro" id="IPR000717">
    <property type="entry name" value="PCI_dom"/>
</dbReference>
<dbReference type="InterPro" id="IPR019585">
    <property type="entry name" value="Rpn7/CSN1"/>
</dbReference>
<dbReference type="InterPro" id="IPR045135">
    <property type="entry name" value="Rpn7_N"/>
</dbReference>
<dbReference type="InterPro" id="IPR036390">
    <property type="entry name" value="WH_DNA-bd_sf"/>
</dbReference>
<dbReference type="PANTHER" id="PTHR14145">
    <property type="entry name" value="26S PROTESOME SUBUNIT 6"/>
    <property type="match status" value="1"/>
</dbReference>
<dbReference type="PANTHER" id="PTHR14145:SF2">
    <property type="entry name" value="COP9 SIGNALOSOME COMPLEX SUBUNIT 1"/>
    <property type="match status" value="1"/>
</dbReference>
<dbReference type="Pfam" id="PF21151">
    <property type="entry name" value="CSN1_C"/>
    <property type="match status" value="1"/>
</dbReference>
<dbReference type="Pfam" id="PF01399">
    <property type="entry name" value="PCI"/>
    <property type="match status" value="1"/>
</dbReference>
<dbReference type="Pfam" id="PF10602">
    <property type="entry name" value="RPN7"/>
    <property type="match status" value="1"/>
</dbReference>
<dbReference type="SMART" id="SM00088">
    <property type="entry name" value="PINT"/>
    <property type="match status" value="1"/>
</dbReference>
<dbReference type="SUPFAM" id="SSF46785">
    <property type="entry name" value="Winged helix' DNA-binding domain"/>
    <property type="match status" value="1"/>
</dbReference>
<dbReference type="PROSITE" id="PS50250">
    <property type="entry name" value="PCI"/>
    <property type="match status" value="1"/>
</dbReference>
<reference key="1">
    <citation type="journal article" date="1999" name="Curr. Biol.">
        <title>The COP9 signalosome is essential for development of Drosophila melanogaster.</title>
        <authorList>
            <person name="Freilich S."/>
            <person name="Oron E."/>
            <person name="Kapp Y."/>
            <person name="Nevo-Caspi Y."/>
            <person name="Orgad S."/>
            <person name="Segal D."/>
            <person name="Chamovitz D.A."/>
        </authorList>
    </citation>
    <scope>NUCLEOTIDE SEQUENCE</scope>
    <scope>SUBCELLULAR LOCATION</scope>
    <scope>PROBABLE COMPOSITION OF THE CSN COMPLEX</scope>
</reference>
<reference key="2">
    <citation type="journal article" date="2000" name="Science">
        <title>The genome sequence of Drosophila melanogaster.</title>
        <authorList>
            <person name="Adams M.D."/>
            <person name="Celniker S.E."/>
            <person name="Holt R.A."/>
            <person name="Evans C.A."/>
            <person name="Gocayne J.D."/>
            <person name="Amanatides P.G."/>
            <person name="Scherer S.E."/>
            <person name="Li P.W."/>
            <person name="Hoskins R.A."/>
            <person name="Galle R.F."/>
            <person name="George R.A."/>
            <person name="Lewis S.E."/>
            <person name="Richards S."/>
            <person name="Ashburner M."/>
            <person name="Henderson S.N."/>
            <person name="Sutton G.G."/>
            <person name="Wortman J.R."/>
            <person name="Yandell M.D."/>
            <person name="Zhang Q."/>
            <person name="Chen L.X."/>
            <person name="Brandon R.C."/>
            <person name="Rogers Y.-H.C."/>
            <person name="Blazej R.G."/>
            <person name="Champe M."/>
            <person name="Pfeiffer B.D."/>
            <person name="Wan K.H."/>
            <person name="Doyle C."/>
            <person name="Baxter E.G."/>
            <person name="Helt G."/>
            <person name="Nelson C.R."/>
            <person name="Miklos G.L.G."/>
            <person name="Abril J.F."/>
            <person name="Agbayani A."/>
            <person name="An H.-J."/>
            <person name="Andrews-Pfannkoch C."/>
            <person name="Baldwin D."/>
            <person name="Ballew R.M."/>
            <person name="Basu A."/>
            <person name="Baxendale J."/>
            <person name="Bayraktaroglu L."/>
            <person name="Beasley E.M."/>
            <person name="Beeson K.Y."/>
            <person name="Benos P.V."/>
            <person name="Berman B.P."/>
            <person name="Bhandari D."/>
            <person name="Bolshakov S."/>
            <person name="Borkova D."/>
            <person name="Botchan M.R."/>
            <person name="Bouck J."/>
            <person name="Brokstein P."/>
            <person name="Brottier P."/>
            <person name="Burtis K.C."/>
            <person name="Busam D.A."/>
            <person name="Butler H."/>
            <person name="Cadieu E."/>
            <person name="Center A."/>
            <person name="Chandra I."/>
            <person name="Cherry J.M."/>
            <person name="Cawley S."/>
            <person name="Dahlke C."/>
            <person name="Davenport L.B."/>
            <person name="Davies P."/>
            <person name="de Pablos B."/>
            <person name="Delcher A."/>
            <person name="Deng Z."/>
            <person name="Mays A.D."/>
            <person name="Dew I."/>
            <person name="Dietz S.M."/>
            <person name="Dodson K."/>
            <person name="Doup L.E."/>
            <person name="Downes M."/>
            <person name="Dugan-Rocha S."/>
            <person name="Dunkov B.C."/>
            <person name="Dunn P."/>
            <person name="Durbin K.J."/>
            <person name="Evangelista C.C."/>
            <person name="Ferraz C."/>
            <person name="Ferriera S."/>
            <person name="Fleischmann W."/>
            <person name="Fosler C."/>
            <person name="Gabrielian A.E."/>
            <person name="Garg N.S."/>
            <person name="Gelbart W.M."/>
            <person name="Glasser K."/>
            <person name="Glodek A."/>
            <person name="Gong F."/>
            <person name="Gorrell J.H."/>
            <person name="Gu Z."/>
            <person name="Guan P."/>
            <person name="Harris M."/>
            <person name="Harris N.L."/>
            <person name="Harvey D.A."/>
            <person name="Heiman T.J."/>
            <person name="Hernandez J.R."/>
            <person name="Houck J."/>
            <person name="Hostin D."/>
            <person name="Houston K.A."/>
            <person name="Howland T.J."/>
            <person name="Wei M.-H."/>
            <person name="Ibegwam C."/>
            <person name="Jalali M."/>
            <person name="Kalush F."/>
            <person name="Karpen G.H."/>
            <person name="Ke Z."/>
            <person name="Kennison J.A."/>
            <person name="Ketchum K.A."/>
            <person name="Kimmel B.E."/>
            <person name="Kodira C.D."/>
            <person name="Kraft C.L."/>
            <person name="Kravitz S."/>
            <person name="Kulp D."/>
            <person name="Lai Z."/>
            <person name="Lasko P."/>
            <person name="Lei Y."/>
            <person name="Levitsky A.A."/>
            <person name="Li J.H."/>
            <person name="Li Z."/>
            <person name="Liang Y."/>
            <person name="Lin X."/>
            <person name="Liu X."/>
            <person name="Mattei B."/>
            <person name="McIntosh T.C."/>
            <person name="McLeod M.P."/>
            <person name="McPherson D."/>
            <person name="Merkulov G."/>
            <person name="Milshina N.V."/>
            <person name="Mobarry C."/>
            <person name="Morris J."/>
            <person name="Moshrefi A."/>
            <person name="Mount S.M."/>
            <person name="Moy M."/>
            <person name="Murphy B."/>
            <person name="Murphy L."/>
            <person name="Muzny D.M."/>
            <person name="Nelson D.L."/>
            <person name="Nelson D.R."/>
            <person name="Nelson K.A."/>
            <person name="Nixon K."/>
            <person name="Nusskern D.R."/>
            <person name="Pacleb J.M."/>
            <person name="Palazzolo M."/>
            <person name="Pittman G.S."/>
            <person name="Pan S."/>
            <person name="Pollard J."/>
            <person name="Puri V."/>
            <person name="Reese M.G."/>
            <person name="Reinert K."/>
            <person name="Remington K."/>
            <person name="Saunders R.D.C."/>
            <person name="Scheeler F."/>
            <person name="Shen H."/>
            <person name="Shue B.C."/>
            <person name="Siden-Kiamos I."/>
            <person name="Simpson M."/>
            <person name="Skupski M.P."/>
            <person name="Smith T.J."/>
            <person name="Spier E."/>
            <person name="Spradling A.C."/>
            <person name="Stapleton M."/>
            <person name="Strong R."/>
            <person name="Sun E."/>
            <person name="Svirskas R."/>
            <person name="Tector C."/>
            <person name="Turner R."/>
            <person name="Venter E."/>
            <person name="Wang A.H."/>
            <person name="Wang X."/>
            <person name="Wang Z.-Y."/>
            <person name="Wassarman D.A."/>
            <person name="Weinstock G.M."/>
            <person name="Weissenbach J."/>
            <person name="Williams S.M."/>
            <person name="Woodage T."/>
            <person name="Worley K.C."/>
            <person name="Wu D."/>
            <person name="Yang S."/>
            <person name="Yao Q.A."/>
            <person name="Ye J."/>
            <person name="Yeh R.-F."/>
            <person name="Zaveri J.S."/>
            <person name="Zhan M."/>
            <person name="Zhang G."/>
            <person name="Zhao Q."/>
            <person name="Zheng L."/>
            <person name="Zheng X.H."/>
            <person name="Zhong F.N."/>
            <person name="Zhong W."/>
            <person name="Zhou X."/>
            <person name="Zhu S.C."/>
            <person name="Zhu X."/>
            <person name="Smith H.O."/>
            <person name="Gibbs R.A."/>
            <person name="Myers E.W."/>
            <person name="Rubin G.M."/>
            <person name="Venter J.C."/>
        </authorList>
    </citation>
    <scope>NUCLEOTIDE SEQUENCE [LARGE SCALE GENOMIC DNA]</scope>
    <source>
        <strain>Berkeley</strain>
    </source>
</reference>
<reference key="3">
    <citation type="journal article" date="2002" name="Genome Biol.">
        <title>Annotation of the Drosophila melanogaster euchromatic genome: a systematic review.</title>
        <authorList>
            <person name="Misra S."/>
            <person name="Crosby M.A."/>
            <person name="Mungall C.J."/>
            <person name="Matthews B.B."/>
            <person name="Campbell K.S."/>
            <person name="Hradecky P."/>
            <person name="Huang Y."/>
            <person name="Kaminker J.S."/>
            <person name="Millburn G.H."/>
            <person name="Prochnik S.E."/>
            <person name="Smith C.D."/>
            <person name="Tupy J.L."/>
            <person name="Whitfield E.J."/>
            <person name="Bayraktaroglu L."/>
            <person name="Berman B.P."/>
            <person name="Bettencourt B.R."/>
            <person name="Celniker S.E."/>
            <person name="de Grey A.D.N.J."/>
            <person name="Drysdale R.A."/>
            <person name="Harris N.L."/>
            <person name="Richter J."/>
            <person name="Russo S."/>
            <person name="Schroeder A.J."/>
            <person name="Shu S.Q."/>
            <person name="Stapleton M."/>
            <person name="Yamada C."/>
            <person name="Ashburner M."/>
            <person name="Gelbart W.M."/>
            <person name="Rubin G.M."/>
            <person name="Lewis S.E."/>
        </authorList>
    </citation>
    <scope>GENOME REANNOTATION</scope>
    <source>
        <strain>Berkeley</strain>
    </source>
</reference>
<reference key="4">
    <citation type="journal article" date="2002" name="Genome Biol.">
        <title>A Drosophila full-length cDNA resource.</title>
        <authorList>
            <person name="Stapleton M."/>
            <person name="Carlson J.W."/>
            <person name="Brokstein P."/>
            <person name="Yu C."/>
            <person name="Champe M."/>
            <person name="George R.A."/>
            <person name="Guarin H."/>
            <person name="Kronmiller B."/>
            <person name="Pacleb J.M."/>
            <person name="Park S."/>
            <person name="Wan K.H."/>
            <person name="Rubin G.M."/>
            <person name="Celniker S.E."/>
        </authorList>
    </citation>
    <scope>NUCLEOTIDE SEQUENCE [LARGE SCALE MRNA]</scope>
    <source>
        <strain>Berkeley</strain>
        <tissue>Embryo</tissue>
    </source>
</reference>
<reference key="5">
    <citation type="journal article" date="2003" name="Dev. Cell">
        <title>The COP9 signalosome promotes degradation of Cyclin E during early Drosophila oogenesis.</title>
        <authorList>
            <person name="Doronkin S."/>
            <person name="Djagaeva I."/>
            <person name="Beckendorf S.K."/>
        </authorList>
    </citation>
    <scope>FUNCTION OF CSN COMPLEX</scope>
</reference>
<evidence type="ECO:0000255" key="1">
    <source>
        <dbReference type="PROSITE-ProRule" id="PRU01185"/>
    </source>
</evidence>
<evidence type="ECO:0000269" key="2">
    <source>
    </source>
</evidence>
<evidence type="ECO:0000305" key="3"/>
<evidence type="ECO:0000305" key="4">
    <source>
    </source>
</evidence>
<gene>
    <name type="primary">CSN1b</name>
    <name type="ORF">CG3889</name>
</gene>
<proteinExistence type="evidence at transcript level"/>
<comment type="function">
    <text evidence="2">Essential component of the COP9 signalosome complex (CSN), a complex involved in various cellular and developmental processes. The CSN complex is an essential regulator of the ubiquitin (Ubl) conjugation pathway by mediating the deneddylation of the cullin subunits of the SCF-type E3 ligase complexes, leading to decrease the Ubl ligase activity of SCF. The CSN complex plays an essential role in oogenesis and embryogenesis and is required for proper photoreceptor R cell differentiation and promote lamina glial cell migration or axon targeting. It also promotes Ubl-dependent degradation of cyclin E (CycE) during early oogenesis.</text>
</comment>
<comment type="subunit">
    <text>Component of the CSN complex, probably composed of CSN1b, alien/CSN2, CSN3, CSN4, CSN5, CSN6, CSN7 and CSN8.</text>
</comment>
<comment type="subcellular location">
    <subcellularLocation>
        <location evidence="4">Cytoplasm</location>
    </subcellularLocation>
    <subcellularLocation>
        <location evidence="4">Nucleus</location>
    </subcellularLocation>
</comment>
<comment type="similarity">
    <text evidence="3">Belongs to the CSN1 family.</text>
</comment>
<feature type="chain" id="PRO_0000120964" description="COP9 signalosome complex subunit 1b">
    <location>
        <begin position="1"/>
        <end position="525"/>
    </location>
</feature>
<feature type="domain" description="PCI" evidence="1">
    <location>
        <begin position="298"/>
        <end position="460"/>
    </location>
</feature>
<feature type="sequence conflict" description="In Ref. 1; AAD28605." evidence="3" ref="1">
    <original>Y</original>
    <variation>F</variation>
    <location>
        <position position="48"/>
    </location>
</feature>
<feature type="sequence conflict" description="In Ref. 1; AAD28605." evidence="3" ref="1">
    <original>D</original>
    <variation>N</variation>
    <location>
        <position position="222"/>
    </location>
</feature>
<feature type="sequence conflict" description="In Ref. 1; AAD28605." evidence="3" ref="1">
    <original>L</original>
    <variation>F</variation>
    <location>
        <position position="324"/>
    </location>
</feature>
<feature type="sequence conflict" description="In Ref. 1; AAD28605." evidence="3" ref="1">
    <original>I</original>
    <variation>K</variation>
    <location>
        <position position="398"/>
    </location>
</feature>
<feature type="sequence conflict" description="In Ref. 1; AAD28605." evidence="3" ref="1">
    <original>L</original>
    <variation>F</variation>
    <location>
        <position position="522"/>
    </location>
</feature>